<reference key="1">
    <citation type="journal article" date="2002" name="Nat. Biotechnol.">
        <title>Genome sequence of the dissimilatory metal ion-reducing bacterium Shewanella oneidensis.</title>
        <authorList>
            <person name="Heidelberg J.F."/>
            <person name="Paulsen I.T."/>
            <person name="Nelson K.E."/>
            <person name="Gaidos E.J."/>
            <person name="Nelson W.C."/>
            <person name="Read T.D."/>
            <person name="Eisen J.A."/>
            <person name="Seshadri R."/>
            <person name="Ward N.L."/>
            <person name="Methe B.A."/>
            <person name="Clayton R.A."/>
            <person name="Meyer T."/>
            <person name="Tsapin A."/>
            <person name="Scott J."/>
            <person name="Beanan M.J."/>
            <person name="Brinkac L.M."/>
            <person name="Daugherty S.C."/>
            <person name="DeBoy R.T."/>
            <person name="Dodson R.J."/>
            <person name="Durkin A.S."/>
            <person name="Haft D.H."/>
            <person name="Kolonay J.F."/>
            <person name="Madupu R."/>
            <person name="Peterson J.D."/>
            <person name="Umayam L.A."/>
            <person name="White O."/>
            <person name="Wolf A.M."/>
            <person name="Vamathevan J.J."/>
            <person name="Weidman J.F."/>
            <person name="Impraim M."/>
            <person name="Lee K."/>
            <person name="Berry K.J."/>
            <person name="Lee C."/>
            <person name="Mueller J."/>
            <person name="Khouri H.M."/>
            <person name="Gill J."/>
            <person name="Utterback T.R."/>
            <person name="McDonald L.A."/>
            <person name="Feldblyum T.V."/>
            <person name="Smith H.O."/>
            <person name="Venter J.C."/>
            <person name="Nealson K.H."/>
            <person name="Fraser C.M."/>
        </authorList>
    </citation>
    <scope>NUCLEOTIDE SEQUENCE [LARGE SCALE GENOMIC DNA]</scope>
    <source>
        <strain>ATCC 700550 / JCM 31522 / CIP 106686 / LMG 19005 / NCIMB 14063 / MR-1</strain>
    </source>
</reference>
<organism>
    <name type="scientific">Shewanella oneidensis (strain ATCC 700550 / JCM 31522 / CIP 106686 / LMG 19005 / NCIMB 14063 / MR-1)</name>
    <dbReference type="NCBI Taxonomy" id="211586"/>
    <lineage>
        <taxon>Bacteria</taxon>
        <taxon>Pseudomonadati</taxon>
        <taxon>Pseudomonadota</taxon>
        <taxon>Gammaproteobacteria</taxon>
        <taxon>Alteromonadales</taxon>
        <taxon>Shewanellaceae</taxon>
        <taxon>Shewanella</taxon>
    </lineage>
</organism>
<name>SYP_SHEON</name>
<evidence type="ECO:0000255" key="1">
    <source>
        <dbReference type="HAMAP-Rule" id="MF_01569"/>
    </source>
</evidence>
<proteinExistence type="inferred from homology"/>
<accession>Q8ECI8</accession>
<gene>
    <name evidence="1" type="primary">proS</name>
    <name type="ordered locus">SO_3154</name>
</gene>
<dbReference type="EC" id="6.1.1.15" evidence="1"/>
<dbReference type="EMBL" id="AE014299">
    <property type="protein sequence ID" value="AAN56154.1"/>
    <property type="molecule type" value="Genomic_DNA"/>
</dbReference>
<dbReference type="RefSeq" id="NP_718710.1">
    <property type="nucleotide sequence ID" value="NC_004347.2"/>
</dbReference>
<dbReference type="RefSeq" id="WP_011073042.1">
    <property type="nucleotide sequence ID" value="NC_004347.2"/>
</dbReference>
<dbReference type="SMR" id="Q8ECI8"/>
<dbReference type="STRING" id="211586.SO_3154"/>
<dbReference type="PaxDb" id="211586-SO_3154"/>
<dbReference type="KEGG" id="son:SO_3154"/>
<dbReference type="PATRIC" id="fig|211586.12.peg.3059"/>
<dbReference type="eggNOG" id="COG0442">
    <property type="taxonomic scope" value="Bacteria"/>
</dbReference>
<dbReference type="HOGENOM" id="CLU_016739_0_0_6"/>
<dbReference type="OrthoDB" id="9809052at2"/>
<dbReference type="PhylomeDB" id="Q8ECI8"/>
<dbReference type="BioCyc" id="SONE211586:G1GMP-2933-MONOMER"/>
<dbReference type="Proteomes" id="UP000008186">
    <property type="component" value="Chromosome"/>
</dbReference>
<dbReference type="GO" id="GO:0005829">
    <property type="term" value="C:cytosol"/>
    <property type="evidence" value="ECO:0000318"/>
    <property type="project" value="GO_Central"/>
</dbReference>
<dbReference type="GO" id="GO:0002161">
    <property type="term" value="F:aminoacyl-tRNA deacylase activity"/>
    <property type="evidence" value="ECO:0007669"/>
    <property type="project" value="InterPro"/>
</dbReference>
<dbReference type="GO" id="GO:0005524">
    <property type="term" value="F:ATP binding"/>
    <property type="evidence" value="ECO:0007669"/>
    <property type="project" value="UniProtKB-UniRule"/>
</dbReference>
<dbReference type="GO" id="GO:0004827">
    <property type="term" value="F:proline-tRNA ligase activity"/>
    <property type="evidence" value="ECO:0000318"/>
    <property type="project" value="GO_Central"/>
</dbReference>
<dbReference type="GO" id="GO:0006433">
    <property type="term" value="P:prolyl-tRNA aminoacylation"/>
    <property type="evidence" value="ECO:0000318"/>
    <property type="project" value="GO_Central"/>
</dbReference>
<dbReference type="CDD" id="cd04334">
    <property type="entry name" value="ProRS-INS"/>
    <property type="match status" value="1"/>
</dbReference>
<dbReference type="CDD" id="cd00861">
    <property type="entry name" value="ProRS_anticodon_short"/>
    <property type="match status" value="1"/>
</dbReference>
<dbReference type="CDD" id="cd00779">
    <property type="entry name" value="ProRS_core_prok"/>
    <property type="match status" value="1"/>
</dbReference>
<dbReference type="FunFam" id="3.30.930.10:FF:000043">
    <property type="entry name" value="Proline--tRNA ligase"/>
    <property type="match status" value="1"/>
</dbReference>
<dbReference type="FunFam" id="3.30.930.10:FF:000062">
    <property type="entry name" value="Proline--tRNA ligase"/>
    <property type="match status" value="1"/>
</dbReference>
<dbReference type="FunFam" id="3.40.50.800:FF:000006">
    <property type="entry name" value="Proline--tRNA ligase"/>
    <property type="match status" value="1"/>
</dbReference>
<dbReference type="FunFam" id="3.90.960.10:FF:000001">
    <property type="entry name" value="Proline--tRNA ligase"/>
    <property type="match status" value="1"/>
</dbReference>
<dbReference type="Gene3D" id="3.40.50.800">
    <property type="entry name" value="Anticodon-binding domain"/>
    <property type="match status" value="1"/>
</dbReference>
<dbReference type="Gene3D" id="3.30.930.10">
    <property type="entry name" value="Bira Bifunctional Protein, Domain 2"/>
    <property type="match status" value="2"/>
</dbReference>
<dbReference type="Gene3D" id="3.90.960.10">
    <property type="entry name" value="YbaK/aminoacyl-tRNA synthetase-associated domain"/>
    <property type="match status" value="1"/>
</dbReference>
<dbReference type="HAMAP" id="MF_01569">
    <property type="entry name" value="Pro_tRNA_synth_type1"/>
    <property type="match status" value="1"/>
</dbReference>
<dbReference type="InterPro" id="IPR002314">
    <property type="entry name" value="aa-tRNA-synt_IIb"/>
</dbReference>
<dbReference type="InterPro" id="IPR006195">
    <property type="entry name" value="aa-tRNA-synth_II"/>
</dbReference>
<dbReference type="InterPro" id="IPR045864">
    <property type="entry name" value="aa-tRNA-synth_II/BPL/LPL"/>
</dbReference>
<dbReference type="InterPro" id="IPR004154">
    <property type="entry name" value="Anticodon-bd"/>
</dbReference>
<dbReference type="InterPro" id="IPR036621">
    <property type="entry name" value="Anticodon-bd_dom_sf"/>
</dbReference>
<dbReference type="InterPro" id="IPR002316">
    <property type="entry name" value="Pro-tRNA-ligase_IIa"/>
</dbReference>
<dbReference type="InterPro" id="IPR004500">
    <property type="entry name" value="Pro-tRNA-synth_IIa_bac-type"/>
</dbReference>
<dbReference type="InterPro" id="IPR023717">
    <property type="entry name" value="Pro-tRNA-Synthase_IIa_type1"/>
</dbReference>
<dbReference type="InterPro" id="IPR050062">
    <property type="entry name" value="Pro-tRNA_synthetase"/>
</dbReference>
<dbReference type="InterPro" id="IPR044140">
    <property type="entry name" value="ProRS_anticodon_short"/>
</dbReference>
<dbReference type="InterPro" id="IPR033730">
    <property type="entry name" value="ProRS_core_prok"/>
</dbReference>
<dbReference type="InterPro" id="IPR036754">
    <property type="entry name" value="YbaK/aa-tRNA-synt-asso_dom_sf"/>
</dbReference>
<dbReference type="InterPro" id="IPR007214">
    <property type="entry name" value="YbaK/aa-tRNA-synth-assoc-dom"/>
</dbReference>
<dbReference type="NCBIfam" id="NF006625">
    <property type="entry name" value="PRK09194.1"/>
    <property type="match status" value="1"/>
</dbReference>
<dbReference type="NCBIfam" id="TIGR00409">
    <property type="entry name" value="proS_fam_II"/>
    <property type="match status" value="1"/>
</dbReference>
<dbReference type="PANTHER" id="PTHR42753">
    <property type="entry name" value="MITOCHONDRIAL RIBOSOME PROTEIN L39/PROLYL-TRNA LIGASE FAMILY MEMBER"/>
    <property type="match status" value="1"/>
</dbReference>
<dbReference type="PANTHER" id="PTHR42753:SF2">
    <property type="entry name" value="PROLINE--TRNA LIGASE"/>
    <property type="match status" value="1"/>
</dbReference>
<dbReference type="Pfam" id="PF03129">
    <property type="entry name" value="HGTP_anticodon"/>
    <property type="match status" value="1"/>
</dbReference>
<dbReference type="Pfam" id="PF00587">
    <property type="entry name" value="tRNA-synt_2b"/>
    <property type="match status" value="1"/>
</dbReference>
<dbReference type="Pfam" id="PF04073">
    <property type="entry name" value="tRNA_edit"/>
    <property type="match status" value="1"/>
</dbReference>
<dbReference type="PIRSF" id="PIRSF001535">
    <property type="entry name" value="ProRS_1"/>
    <property type="match status" value="1"/>
</dbReference>
<dbReference type="PRINTS" id="PR01046">
    <property type="entry name" value="TRNASYNTHPRO"/>
</dbReference>
<dbReference type="SUPFAM" id="SSF52954">
    <property type="entry name" value="Class II aaRS ABD-related"/>
    <property type="match status" value="1"/>
</dbReference>
<dbReference type="SUPFAM" id="SSF55681">
    <property type="entry name" value="Class II aaRS and biotin synthetases"/>
    <property type="match status" value="1"/>
</dbReference>
<dbReference type="SUPFAM" id="SSF55826">
    <property type="entry name" value="YbaK/ProRS associated domain"/>
    <property type="match status" value="1"/>
</dbReference>
<dbReference type="PROSITE" id="PS50862">
    <property type="entry name" value="AA_TRNA_LIGASE_II"/>
    <property type="match status" value="1"/>
</dbReference>
<sequence length="570" mass="63196">MRVSKYLLSTQKETPANAEVISHQLMLRAGMIRRNASGLYSYLPSGLRVLRKVEAIVREEMNKAGAIEILMPMVQPADLWVETGRWDKFGPELLRFKDRHNRDFVLGPTHEEVITDLIRKEVSSYKQLPLNLYQIQTKFRDEVRPRFGVMRSREFLMKDAYSFHLDMDTLNETYEAMYQAYSNILSRMGLAFRPVLADTGSIGGSMSHEFHVLAQSGEDLIAYSTGSDYAANIEKAESPMPTETRGAATKELRLVDTPNAKTIAELVEQFGLDITKTVKTLIVKGATEEAPLVALIVRGDHELNEIKADKLDLVASPLEFAPEALIRDAIGAGPGSLGPVGLNMPIIIDHSVSVMSDFAAGANVDDKHYFGINWERDLPLAQAADIRNVVEGEPTPDGLGTYAMARGIEVGHIFQLGTNYSKSMNATVLDENGKSQVLLMGCYGVGVSRIVAAAIEQNFDDRGIVWPEAIAPFSVGILPMNMHKSHRVTDIAEQLYKDLSAAGIDVLLDDRKERPGVMFADMELIGIPHTVVIGDRNIDAGVFEYKNRRTGEKQDVPFDQIVDFLKNLQA</sequence>
<feature type="chain" id="PRO_0000248762" description="Proline--tRNA ligase">
    <location>
        <begin position="1"/>
        <end position="570"/>
    </location>
</feature>
<protein>
    <recommendedName>
        <fullName evidence="1">Proline--tRNA ligase</fullName>
        <ecNumber evidence="1">6.1.1.15</ecNumber>
    </recommendedName>
    <alternativeName>
        <fullName evidence="1">Prolyl-tRNA synthetase</fullName>
        <shortName evidence="1">ProRS</shortName>
    </alternativeName>
</protein>
<comment type="function">
    <text evidence="1">Catalyzes the attachment of proline to tRNA(Pro) in a two-step reaction: proline is first activated by ATP to form Pro-AMP and then transferred to the acceptor end of tRNA(Pro). As ProRS can inadvertently accommodate and process non-cognate amino acids such as alanine and cysteine, to avoid such errors it has two additional distinct editing activities against alanine. One activity is designated as 'pretransfer' editing and involves the tRNA(Pro)-independent hydrolysis of activated Ala-AMP. The other activity is designated 'posttransfer' editing and involves deacylation of mischarged Ala-tRNA(Pro). The misacylated Cys-tRNA(Pro) is not edited by ProRS.</text>
</comment>
<comment type="catalytic activity">
    <reaction evidence="1">
        <text>tRNA(Pro) + L-proline + ATP = L-prolyl-tRNA(Pro) + AMP + diphosphate</text>
        <dbReference type="Rhea" id="RHEA:14305"/>
        <dbReference type="Rhea" id="RHEA-COMP:9700"/>
        <dbReference type="Rhea" id="RHEA-COMP:9702"/>
        <dbReference type="ChEBI" id="CHEBI:30616"/>
        <dbReference type="ChEBI" id="CHEBI:33019"/>
        <dbReference type="ChEBI" id="CHEBI:60039"/>
        <dbReference type="ChEBI" id="CHEBI:78442"/>
        <dbReference type="ChEBI" id="CHEBI:78532"/>
        <dbReference type="ChEBI" id="CHEBI:456215"/>
        <dbReference type="EC" id="6.1.1.15"/>
    </reaction>
</comment>
<comment type="subunit">
    <text evidence="1">Homodimer.</text>
</comment>
<comment type="subcellular location">
    <subcellularLocation>
        <location evidence="1">Cytoplasm</location>
    </subcellularLocation>
</comment>
<comment type="domain">
    <text evidence="1">Consists of three domains: the N-terminal catalytic domain, the editing domain and the C-terminal anticodon-binding domain.</text>
</comment>
<comment type="similarity">
    <text evidence="1">Belongs to the class-II aminoacyl-tRNA synthetase family. ProS type 1 subfamily.</text>
</comment>
<keyword id="KW-0030">Aminoacyl-tRNA synthetase</keyword>
<keyword id="KW-0067">ATP-binding</keyword>
<keyword id="KW-0963">Cytoplasm</keyword>
<keyword id="KW-0436">Ligase</keyword>
<keyword id="KW-0547">Nucleotide-binding</keyword>
<keyword id="KW-0648">Protein biosynthesis</keyword>
<keyword id="KW-1185">Reference proteome</keyword>